<accession>P48670</accession>
<feature type="chain" id="PRO_0000063753" description="Vimentin">
    <location>
        <begin position="1" status="less than"/>
        <end position="448"/>
    </location>
</feature>
<feature type="domain" description="IF rod" evidence="7">
    <location>
        <begin position="85"/>
        <end position="393"/>
    </location>
</feature>
<feature type="region of interest" description="Head">
    <location>
        <begin position="1" status="less than"/>
        <end position="77"/>
    </location>
</feature>
<feature type="region of interest" description="Coil 1A">
    <location>
        <begin position="78"/>
        <end position="113"/>
    </location>
</feature>
<feature type="region of interest" description="Linker 1">
    <location>
        <begin position="114"/>
        <end position="135"/>
    </location>
</feature>
<feature type="region of interest" description="Coil 1B">
    <location>
        <begin position="136"/>
        <end position="227"/>
    </location>
</feature>
<feature type="region of interest" description="Linker 12">
    <location>
        <begin position="228"/>
        <end position="250"/>
    </location>
</feature>
<feature type="region of interest" description="Coil 2">
    <location>
        <begin position="251"/>
        <end position="389"/>
    </location>
</feature>
<feature type="region of interest" description="Tail">
    <location>
        <begin position="390"/>
        <end position="448"/>
    </location>
</feature>
<feature type="coiled-coil region">
    <location>
        <begin position="78"/>
        <end position="113"/>
    </location>
</feature>
<feature type="coiled-coil region">
    <location>
        <begin position="136"/>
        <end position="227"/>
    </location>
</feature>
<feature type="coiled-coil region">
    <location>
        <begin position="285"/>
        <end position="389"/>
    </location>
</feature>
<feature type="short sequence motif" description="[IL]-x-C-x-x-[DE] motif" evidence="3">
    <location>
        <begin position="308"/>
        <end position="311"/>
    </location>
</feature>
<feature type="site" description="Stutter" evidence="1">
    <location>
        <position position="333"/>
    </location>
</feature>
<feature type="modified residue" description="Phosphoserine" evidence="4">
    <location>
        <position position="9"/>
    </location>
</feature>
<feature type="modified residue" description="Phosphoserine; by PKC; alternate" evidence="3">
    <location>
        <position position="17"/>
    </location>
</feature>
<feature type="modified residue" description="Phosphoserine; by CaMK2, PKA, PKC and ROCK2" evidence="3">
    <location>
        <position position="22"/>
    </location>
</feature>
<feature type="modified residue" description="Phosphoserine" evidence="4">
    <location>
        <position position="29"/>
    </location>
</feature>
<feature type="modified residue" description="Phosphoserine" evidence="3">
    <location>
        <position position="31"/>
    </location>
</feature>
<feature type="modified residue" description="Phosphoserine" evidence="4">
    <location>
        <position position="33"/>
    </location>
</feature>
<feature type="modified residue" description="Phosphotyrosine" evidence="4">
    <location>
        <position position="35"/>
    </location>
</feature>
<feature type="modified residue" description="Phosphoserine" evidence="5">
    <location>
        <position position="37"/>
    </location>
</feature>
<feature type="modified residue" description="Phosphoserine; by CDK5 and CDK1" evidence="3">
    <location>
        <position position="38"/>
    </location>
</feature>
<feature type="modified residue" description="Phosphotyrosine" evidence="3">
    <location>
        <position position="43"/>
    </location>
</feature>
<feature type="modified residue" description="Phosphoserine; by PKA and PKC" evidence="4">
    <location>
        <position position="48"/>
    </location>
</feature>
<feature type="modified residue" description="Phosphoserine; by AURKB and ROCK2" evidence="3">
    <location>
        <position position="54"/>
    </location>
</feature>
<feature type="modified residue" description="Phosphoserine" evidence="3">
    <location>
        <position position="55"/>
    </location>
</feature>
<feature type="modified residue" description="Phosphoserine; by CaMK2" evidence="4">
    <location>
        <position position="65"/>
    </location>
</feature>
<feature type="modified residue" description="Phosphoserine" evidence="3">
    <location>
        <position position="69"/>
    </location>
</feature>
<feature type="modified residue" description="Phosphotyrosine" evidence="3">
    <location>
        <position position="99"/>
    </location>
</feature>
<feature type="modified residue" description="N6-acetyllysine; alternate" evidence="3">
    <location>
        <position position="102"/>
    </location>
</feature>
<feature type="modified residue" description="N6-succinyllysine; alternate" evidence="4">
    <location>
        <position position="102"/>
    </location>
</feature>
<feature type="modified residue" description="N6-acetyllysine; alternate" evidence="4">
    <location>
        <position position="111"/>
    </location>
</feature>
<feature type="modified residue" description="N6-succinyllysine; alternate" evidence="4">
    <location>
        <position position="111"/>
    </location>
</feature>
<feature type="modified residue" description="N6-acetyllysine; alternate" evidence="3">
    <location>
        <position position="121"/>
    </location>
</feature>
<feature type="modified residue" description="Phosphoserine" evidence="3">
    <location>
        <position position="126"/>
    </location>
</feature>
<feature type="modified residue" description="N6-acetyllysine" evidence="4">
    <location>
        <position position="150"/>
    </location>
</feature>
<feature type="modified residue" description="N6-acetyllysine; alternate" evidence="4">
    <location>
        <position position="170"/>
    </location>
</feature>
<feature type="modified residue" description="N6-succinyllysine; alternate" evidence="4">
    <location>
        <position position="170"/>
    </location>
</feature>
<feature type="modified residue" description="Phosphoserine" evidence="3">
    <location>
        <position position="196"/>
    </location>
</feature>
<feature type="modified residue" description="N6-acetyllysine; alternate" evidence="4">
    <location>
        <position position="205"/>
    </location>
</feature>
<feature type="modified residue" description="Phosphoserine" evidence="3">
    <location>
        <position position="208"/>
    </location>
</feature>
<feature type="modified residue" description="N6-acetyllysine" evidence="4">
    <location>
        <position position="217"/>
    </location>
</feature>
<feature type="modified residue" description="N6-acetyllysine; alternate" evidence="4">
    <location>
        <position position="276"/>
    </location>
</feature>
<feature type="modified residue" description="N6-succinyllysine; alternate" evidence="4">
    <location>
        <position position="276"/>
    </location>
</feature>
<feature type="modified residue" description="Phosphoserine" evidence="3">
    <location>
        <position position="281"/>
    </location>
</feature>
<feature type="modified residue" description="Phosphoserine" evidence="4">
    <location>
        <position position="307"/>
    </location>
</feature>
<feature type="modified residue" description="N6-acetyllysine; alternate" evidence="3">
    <location>
        <position position="355"/>
    </location>
</feature>
<feature type="modified residue" description="Phosphoserine" evidence="3">
    <location>
        <position position="391"/>
    </location>
</feature>
<feature type="modified residue" description="Phosphoserine" evidence="6">
    <location>
        <position position="394"/>
    </location>
</feature>
<feature type="modified residue" description="Phosphoserine" evidence="3">
    <location>
        <position position="401"/>
    </location>
</feature>
<feature type="modified residue" description="Phosphoserine" evidence="3">
    <location>
        <position position="402"/>
    </location>
</feature>
<feature type="modified residue" description="Phosphothreonine" evidence="3">
    <location>
        <position position="408"/>
    </location>
</feature>
<feature type="modified residue" description="Phosphoserine" evidence="3">
    <location>
        <position position="412"/>
    </location>
</feature>
<feature type="modified residue" description="Phosphothreonine" evidence="3">
    <location>
        <position position="418"/>
    </location>
</feature>
<feature type="modified residue" description="Phosphoserine" evidence="3">
    <location>
        <position position="420"/>
    </location>
</feature>
<feature type="modified residue" description="N6-acetyllysine; alternate" evidence="3">
    <location>
        <position position="427"/>
    </location>
</feature>
<feature type="modified residue" description="N6-succinyllysine; alternate" evidence="4">
    <location>
        <position position="427"/>
    </location>
</feature>
<feature type="modified residue" description="Phosphothreonine" evidence="3">
    <location>
        <position position="428"/>
    </location>
</feature>
<feature type="modified residue" description="Phosphothreonine" evidence="3">
    <location>
        <position position="440"/>
    </location>
</feature>
<feature type="modified residue" description="Phosphoserine" evidence="3">
    <location>
        <position position="441"/>
    </location>
</feature>
<feature type="glycosylation site" description="O-linked (GlcNAc) threonine" evidence="1">
    <location>
        <position position="16"/>
    </location>
</feature>
<feature type="glycosylation site" description="O-linked (GlcNAc) serine; alternate" evidence="1">
    <location>
        <position position="17"/>
    </location>
</feature>
<feature type="cross-link" description="Glycyl lysine isopeptide (Lys-Gly) (interchain with G-Cter in SUMO2)" evidence="3">
    <location>
        <position position="86"/>
    </location>
</feature>
<feature type="cross-link" description="Glycyl lysine isopeptide (Lys-Gly) (interchain with G-Cter in SUMO2); alternate" evidence="3">
    <location>
        <position position="102"/>
    </location>
</feature>
<feature type="cross-link" description="Glycyl lysine isopeptide (Lys-Gly) (interchain with G-Cter in SUMO2); alternate" evidence="3">
    <location>
        <position position="111"/>
    </location>
</feature>
<feature type="cross-link" description="Glycyl lysine isopeptide (Lys-Gly) (interchain with G-Cter in SUMO2); alternate" evidence="3">
    <location>
        <position position="121"/>
    </location>
</feature>
<feature type="cross-link" description="Glycyl lysine isopeptide (Lys-Gly) (interchain with G-Cter in SUMO2); alternate" evidence="3">
    <location>
        <position position="205"/>
    </location>
</feature>
<feature type="cross-link" description="Glycyl lysine isopeptide (Lys-Gly) (interchain with G-Cter in SUMO2)" evidence="3">
    <location>
        <position position="244"/>
    </location>
</feature>
<feature type="cross-link" description="Glycyl lysine isopeptide (Lys-Gly) (interchain with G-Cter in SUMO2); alternate" evidence="3">
    <location>
        <position position="276"/>
    </location>
</feature>
<feature type="cross-link" description="Glycyl lysine isopeptide (Lys-Gly) (interchain with G-Cter in SUMO2)" evidence="3">
    <location>
        <position position="295"/>
    </location>
</feature>
<feature type="cross-link" description="Glycyl lysine isopeptide (Lys-Gly) (interchain with G-Cter in SUMO2); alternate" evidence="3">
    <location>
        <position position="355"/>
    </location>
</feature>
<feature type="cross-link" description="Glycyl lysine isopeptide (Lys-Gly) (interchain with G-Cter in SUMO2)" evidence="3">
    <location>
        <position position="421"/>
    </location>
</feature>
<feature type="cross-link" description="Glycyl lysine isopeptide (Lys-Gly) (interchain with G-Cter in SUMO1); alternate" evidence="3">
    <location>
        <position position="427"/>
    </location>
</feature>
<feature type="cross-link" description="Glycyl lysine isopeptide (Lys-Gly) (interchain with G-Cter in SUMO2); alternate" evidence="3">
    <location>
        <position position="427"/>
    </location>
</feature>
<feature type="non-terminal residue">
    <location>
        <position position="1"/>
    </location>
</feature>
<name>VIME_CRIGR</name>
<organism>
    <name type="scientific">Cricetulus griseus</name>
    <name type="common">Chinese hamster</name>
    <name type="synonym">Cricetulus barabensis griseus</name>
    <dbReference type="NCBI Taxonomy" id="10029"/>
    <lineage>
        <taxon>Eukaryota</taxon>
        <taxon>Metazoa</taxon>
        <taxon>Chordata</taxon>
        <taxon>Craniata</taxon>
        <taxon>Vertebrata</taxon>
        <taxon>Euteleostomi</taxon>
        <taxon>Mammalia</taxon>
        <taxon>Eutheria</taxon>
        <taxon>Euarchontoglires</taxon>
        <taxon>Glires</taxon>
        <taxon>Rodentia</taxon>
        <taxon>Myomorpha</taxon>
        <taxon>Muroidea</taxon>
        <taxon>Cricetidae</taxon>
        <taxon>Cricetinae</taxon>
        <taxon>Cricetulus</taxon>
    </lineage>
</organism>
<proteinExistence type="evidence at transcript level"/>
<comment type="function">
    <text evidence="2 5">Vimentins are class-III intermediate filaments found in various non-epithelial cells, especially mesenchymal cells. Vimentin is attached to the nucleus, endoplasmic reticulum, and mitochondria, either laterally or terminally. Plays a role in cell directional movement, orientation, cell sheet organization and Golgi complex polarization at the cell migration front (By similarity). Protects SCRIB from proteasomal degradation and facilitates its localization to intermediate filaments in a cell contact-mediated manner (By similarity).</text>
</comment>
<comment type="function">
    <text evidence="3">Involved with LARP6 in the stabilization of type I collagen mRNAs for CO1A1 and CO1A2.</text>
</comment>
<comment type="subunit">
    <text evidence="3 4 5">Homomer assembled from elementary dimers (By similarity). Identified in complexes that contain VIM, EZR, AHNAK, BFSP1, BFSP2, ANK2, PLEC, PRX and spectrin (By similarity). Interacts with BCAS3 (By similarity). Interacts with LGSN (By similarity). Interacts with SYNM (By similarity). Interacts (via rod region) with PLEC (via CH 1 domain) (By similarity). Interacts with STK33 (By similarity). Interacts with LARP6 (By similarity). Interacts with RAB8B (By similarity). Interacts with TOR1A; the interaction associates TOR1A with the cytoskeleton. Interacts with TOR1AIP1 (By similarity). Interacts with TOR1AIP1 (By similarity). Interacts with DIAPH1 (By similarity). Interacts with EPPK1; interaction is dependent of higher-order structure of intermediate filament (By similarity). Interacts with the non-receptor tyrosine kinase SRMS; the interaction leads to phosphorylation of VIM (By similarity). Interacts with NOD2 (By similarity). Interacts (via head region) with CORO1C (By similarity). Interacts with HDGF (By similarity). Interacts with PRKCE (via phorbol-ester/DAG-type 2 domain) (By similarity). Interacts with BFSP2 (By similarity). Interacts with PPL (By similarity). Interacts with PKP1 and PKP2 (By similarity). Interacts with SCRIB (via PDZ domains); the interaction protects SCRIB from proteasomal degradation and facilitates SCRIB localization to intermediate filaments, the interaction is reduced by cell contact inhibition (By similarity).</text>
</comment>
<comment type="subcellular location">
    <subcellularLocation>
        <location evidence="3">Cytoplasm</location>
    </subcellularLocation>
    <subcellularLocation>
        <location evidence="3">Cytoplasm</location>
        <location evidence="3">Cytoskeleton</location>
    </subcellularLocation>
    <subcellularLocation>
        <location evidence="5">Nucleus matrix</location>
    </subcellularLocation>
    <subcellularLocation>
        <location evidence="4">Cell membrane</location>
    </subcellularLocation>
</comment>
<comment type="domain">
    <text evidence="3">The central alpha-helical coiled-coil IF rod domain mediates elementary homodimerization.</text>
</comment>
<comment type="domain">
    <text evidence="3">The [IL]-x-C-x-x-[DE] motif is a proposed target motif for cysteine S-nitrosylation mediated by the iNOS-S100A8/A9 transnitrosylase complex.</text>
</comment>
<comment type="PTM">
    <text evidence="3 5">One of the most prominent phosphoproteins in various cells of mesenchymal origin. Phosphorylation is enhanced during cell division, at which time vimentin filaments are significantly reorganized. Phosphorylation by PKN1 inhibits the formation of filaments. Filament disassembly during mitosis is promoted by phosphorylation at Ser-37 as well as by nestin. Phosphorylated at Ser-38 by CDK5 during neutrophil secretion in the cytoplasm. Phosphorylated by STK33. Phosphorylated on tyrosine residues by SRMS.</text>
</comment>
<comment type="PTM">
    <text evidence="3">S-nitrosylation is induced by interferon-gamma and oxidatively-modified low-densitity lipoprotein (LDL(ox)) possibly implicating the iNOS-S100A8/9 transnitrosylase complex.</text>
</comment>
<comment type="similarity">
    <text evidence="7">Belongs to the intermediate filament family.</text>
</comment>
<reference key="1">
    <citation type="journal article" date="1983" name="Mol. Biol. Rep.">
        <title>Organization and expression of the vimentin gene.</title>
        <authorList>
            <person name="Bloemendal H."/>
            <person name="Quax W."/>
            <person name="Quax-Jeuken Y."/>
            <person name="Dodemont H."/>
            <person name="Ramaekers F."/>
            <person name="Dunia I."/>
            <person name="Benedetti L."/>
        </authorList>
    </citation>
    <scope>NUCLEOTIDE SEQUENCE [MRNA]</scope>
</reference>
<reference key="2">
    <citation type="submission" date="1995-05" db="EMBL/GenBank/DDBJ databases">
        <authorList>
            <person name="Khodjakov A.L."/>
            <person name="Koonce M.P."/>
        </authorList>
    </citation>
    <scope>NUCLEOTIDE SEQUENCE [MRNA] OF 69-448</scope>
</reference>
<protein>
    <recommendedName>
        <fullName>Vimentin</fullName>
    </recommendedName>
</protein>
<sequence length="448" mass="51849">PRHLEPAGSNRSYVTTSTRTYSLGALRPSTSRSLYSSSPGGAYVTRSSAVRLRSSMPGVRLLQDSVDFSLADAINTEFKNTRTNEKVELQELNDRFADYIDKVRFLEQQNKILLAELEQLKGQGKSRLGDLYEEEMRELRRQVDQLTNDKARVEVERDNLAEDIIRLREKLQEEMLQREEAESTLQSFRQDVDNASLARLDLERKVESLQEEIAFLKKLHDEEIQELQAQIQEQHVQIDVDVSKPDLTAALRDVRQQYESVAAKNLQEAEEWYKSKFADLSEAANRNNDALRQAKQESNEYRRQVQSLTCEVDALKGTNESLERQMREMEENFALEAANYQDTIGRLQDEIQNMKEEMARHLREYQDLLNVKMALDIEIATYRKLLEGEESRISLPLPNFSSLNLRETNLESLPLVDTHSKRTLLIKTVETRDGQVINETSQHHDDLE</sequence>
<keyword id="KW-0007">Acetylation</keyword>
<keyword id="KW-1003">Cell membrane</keyword>
<keyword id="KW-0175">Coiled coil</keyword>
<keyword id="KW-0963">Cytoplasm</keyword>
<keyword id="KW-0206">Cytoskeleton</keyword>
<keyword id="KW-0325">Glycoprotein</keyword>
<keyword id="KW-0403">Intermediate filament</keyword>
<keyword id="KW-1017">Isopeptide bond</keyword>
<keyword id="KW-0472">Membrane</keyword>
<keyword id="KW-0539">Nucleus</keyword>
<keyword id="KW-0597">Phosphoprotein</keyword>
<keyword id="KW-0702">S-nitrosylation</keyword>
<keyword id="KW-0832">Ubl conjugation</keyword>
<evidence type="ECO:0000250" key="1"/>
<evidence type="ECO:0000250" key="2">
    <source>
        <dbReference type="UniProtKB" id="A0A8C0N8E3"/>
    </source>
</evidence>
<evidence type="ECO:0000250" key="3">
    <source>
        <dbReference type="UniProtKB" id="P08670"/>
    </source>
</evidence>
<evidence type="ECO:0000250" key="4">
    <source>
        <dbReference type="UniProtKB" id="P20152"/>
    </source>
</evidence>
<evidence type="ECO:0000250" key="5">
    <source>
        <dbReference type="UniProtKB" id="P31000"/>
    </source>
</evidence>
<evidence type="ECO:0000250" key="6">
    <source>
        <dbReference type="UniProtKB" id="P84198"/>
    </source>
</evidence>
<evidence type="ECO:0000255" key="7">
    <source>
        <dbReference type="PROSITE-ProRule" id="PRU01188"/>
    </source>
</evidence>
<dbReference type="EMBL" id="M16718">
    <property type="protein sequence ID" value="AAA37029.1"/>
    <property type="molecule type" value="mRNA"/>
</dbReference>
<dbReference type="EMBL" id="X87227">
    <property type="protein sequence ID" value="CAA60679.1"/>
    <property type="molecule type" value="mRNA"/>
</dbReference>
<dbReference type="PIR" id="I48128">
    <property type="entry name" value="I48128"/>
</dbReference>
<dbReference type="SMR" id="P48670"/>
<dbReference type="IntAct" id="P48670">
    <property type="interactions" value="1"/>
</dbReference>
<dbReference type="GlyCosmos" id="P48670">
    <property type="glycosylation" value="2 sites, No reported glycans"/>
</dbReference>
<dbReference type="PaxDb" id="10029-XP_007622787.1"/>
<dbReference type="eggNOG" id="KOG0977">
    <property type="taxonomic scope" value="Eukaryota"/>
</dbReference>
<dbReference type="Proteomes" id="UP000694386">
    <property type="component" value="Unplaced"/>
</dbReference>
<dbReference type="Proteomes" id="UP001108280">
    <property type="component" value="Unplaced"/>
</dbReference>
<dbReference type="GO" id="GO:0030424">
    <property type="term" value="C:axon"/>
    <property type="evidence" value="ECO:0007669"/>
    <property type="project" value="TreeGrafter"/>
</dbReference>
<dbReference type="GO" id="GO:0005737">
    <property type="term" value="C:cytoplasm"/>
    <property type="evidence" value="ECO:0000250"/>
    <property type="project" value="UniProtKB"/>
</dbReference>
<dbReference type="GO" id="GO:0005882">
    <property type="term" value="C:intermediate filament"/>
    <property type="evidence" value="ECO:0000250"/>
    <property type="project" value="UniProtKB"/>
</dbReference>
<dbReference type="GO" id="GO:0030496">
    <property type="term" value="C:midbody"/>
    <property type="evidence" value="ECO:0000314"/>
    <property type="project" value="UniProtKB"/>
</dbReference>
<dbReference type="GO" id="GO:0016363">
    <property type="term" value="C:nuclear matrix"/>
    <property type="evidence" value="ECO:0007669"/>
    <property type="project" value="UniProtKB-SubCell"/>
</dbReference>
<dbReference type="GO" id="GO:0005886">
    <property type="term" value="C:plasma membrane"/>
    <property type="evidence" value="ECO:0000250"/>
    <property type="project" value="UniProtKB"/>
</dbReference>
<dbReference type="GO" id="GO:0005200">
    <property type="term" value="F:structural constituent of cytoskeleton"/>
    <property type="evidence" value="ECO:0007669"/>
    <property type="project" value="TreeGrafter"/>
</dbReference>
<dbReference type="GO" id="GO:0071222">
    <property type="term" value="P:cellular response to lipopolysaccharide"/>
    <property type="evidence" value="ECO:0000250"/>
    <property type="project" value="UniProtKB"/>
</dbReference>
<dbReference type="GO" id="GO:0071225">
    <property type="term" value="P:cellular response to muramyl dipeptide"/>
    <property type="evidence" value="ECO:0000250"/>
    <property type="project" value="UniProtKB"/>
</dbReference>
<dbReference type="GO" id="GO:0045109">
    <property type="term" value="P:intermediate filament organization"/>
    <property type="evidence" value="ECO:0000250"/>
    <property type="project" value="UniProtKB"/>
</dbReference>
<dbReference type="GO" id="GO:0010634">
    <property type="term" value="P:positive regulation of epithelial cell migration"/>
    <property type="evidence" value="ECO:0000250"/>
    <property type="project" value="UniProtKB"/>
</dbReference>
<dbReference type="FunFam" id="1.20.5.1160:FF:000001">
    <property type="entry name" value="Keratin type II"/>
    <property type="match status" value="1"/>
</dbReference>
<dbReference type="FunFam" id="1.20.5.170:FF:000002">
    <property type="entry name" value="Type I keratin KA11"/>
    <property type="match status" value="1"/>
</dbReference>
<dbReference type="FunFam" id="1.20.5.500:FF:000001">
    <property type="entry name" value="Type II keratin 23"/>
    <property type="match status" value="1"/>
</dbReference>
<dbReference type="Gene3D" id="1.20.5.170">
    <property type="match status" value="1"/>
</dbReference>
<dbReference type="Gene3D" id="1.20.5.500">
    <property type="entry name" value="Single helix bin"/>
    <property type="match status" value="1"/>
</dbReference>
<dbReference type="Gene3D" id="1.20.5.1160">
    <property type="entry name" value="Vasodilator-stimulated phosphoprotein"/>
    <property type="match status" value="1"/>
</dbReference>
<dbReference type="InterPro" id="IPR018039">
    <property type="entry name" value="IF_conserved"/>
</dbReference>
<dbReference type="InterPro" id="IPR039008">
    <property type="entry name" value="IF_rod_dom"/>
</dbReference>
<dbReference type="InterPro" id="IPR006821">
    <property type="entry name" value="Intermed_filament_DNA-bd"/>
</dbReference>
<dbReference type="InterPro" id="IPR050405">
    <property type="entry name" value="Intermediate_filament"/>
</dbReference>
<dbReference type="PANTHER" id="PTHR45652">
    <property type="entry name" value="GLIAL FIBRILLARY ACIDIC PROTEIN"/>
    <property type="match status" value="1"/>
</dbReference>
<dbReference type="PANTHER" id="PTHR45652:SF5">
    <property type="entry name" value="VIMENTIN"/>
    <property type="match status" value="1"/>
</dbReference>
<dbReference type="Pfam" id="PF00038">
    <property type="entry name" value="Filament"/>
    <property type="match status" value="1"/>
</dbReference>
<dbReference type="Pfam" id="PF04732">
    <property type="entry name" value="Filament_head"/>
    <property type="match status" value="1"/>
</dbReference>
<dbReference type="SMART" id="SM01391">
    <property type="entry name" value="Filament"/>
    <property type="match status" value="1"/>
</dbReference>
<dbReference type="SUPFAM" id="SSF64593">
    <property type="entry name" value="Intermediate filament protein, coiled coil region"/>
    <property type="match status" value="2"/>
</dbReference>
<dbReference type="PROSITE" id="PS00226">
    <property type="entry name" value="IF_ROD_1"/>
    <property type="match status" value="1"/>
</dbReference>
<dbReference type="PROSITE" id="PS51842">
    <property type="entry name" value="IF_ROD_2"/>
    <property type="match status" value="1"/>
</dbReference>
<gene>
    <name type="primary">VIM</name>
</gene>